<organism>
    <name type="scientific">Homo sapiens</name>
    <name type="common">Human</name>
    <dbReference type="NCBI Taxonomy" id="9606"/>
    <lineage>
        <taxon>Eukaryota</taxon>
        <taxon>Metazoa</taxon>
        <taxon>Chordata</taxon>
        <taxon>Craniata</taxon>
        <taxon>Vertebrata</taxon>
        <taxon>Euteleostomi</taxon>
        <taxon>Mammalia</taxon>
        <taxon>Eutheria</taxon>
        <taxon>Euarchontoglires</taxon>
        <taxon>Primates</taxon>
        <taxon>Haplorrhini</taxon>
        <taxon>Catarrhini</taxon>
        <taxon>Hominidae</taxon>
        <taxon>Homo</taxon>
    </lineage>
</organism>
<reference key="1">
    <citation type="journal article" date="1993" name="Oncogene">
        <title>Activin receptor-like kinases: a novel subclass of cell-surface receptors with predicted serine/threonine kinase activity.</title>
        <authorList>
            <person name="ten Dijke P."/>
            <person name="Ichijo H."/>
            <person name="Franzen P."/>
            <person name="Schulz P."/>
            <person name="Saras J."/>
            <person name="Toyoshima H."/>
            <person name="Heldin C.-H."/>
            <person name="Miyazono K."/>
        </authorList>
    </citation>
    <scope>NUCLEOTIDE SEQUENCE [MRNA]</scope>
    <scope>VARIANT THR-2</scope>
    <source>
        <tissue>Placenta</tissue>
    </source>
</reference>
<reference key="2">
    <citation type="journal article" date="2004" name="Nat. Genet.">
        <title>Complete sequencing and characterization of 21,243 full-length human cDNAs.</title>
        <authorList>
            <person name="Ota T."/>
            <person name="Suzuki Y."/>
            <person name="Nishikawa T."/>
            <person name="Otsuki T."/>
            <person name="Sugiyama T."/>
            <person name="Irie R."/>
            <person name="Wakamatsu A."/>
            <person name="Hayashi K."/>
            <person name="Sato H."/>
            <person name="Nagai K."/>
            <person name="Kimura K."/>
            <person name="Makita H."/>
            <person name="Sekine M."/>
            <person name="Obayashi M."/>
            <person name="Nishi T."/>
            <person name="Shibahara T."/>
            <person name="Tanaka T."/>
            <person name="Ishii S."/>
            <person name="Yamamoto J."/>
            <person name="Saito K."/>
            <person name="Kawai Y."/>
            <person name="Isono Y."/>
            <person name="Nakamura Y."/>
            <person name="Nagahari K."/>
            <person name="Murakami K."/>
            <person name="Yasuda T."/>
            <person name="Iwayanagi T."/>
            <person name="Wagatsuma M."/>
            <person name="Shiratori A."/>
            <person name="Sudo H."/>
            <person name="Hosoiri T."/>
            <person name="Kaku Y."/>
            <person name="Kodaira H."/>
            <person name="Kondo H."/>
            <person name="Sugawara M."/>
            <person name="Takahashi M."/>
            <person name="Kanda K."/>
            <person name="Yokoi T."/>
            <person name="Furuya T."/>
            <person name="Kikkawa E."/>
            <person name="Omura Y."/>
            <person name="Abe K."/>
            <person name="Kamihara K."/>
            <person name="Katsuta N."/>
            <person name="Sato K."/>
            <person name="Tanikawa M."/>
            <person name="Yamazaki M."/>
            <person name="Ninomiya K."/>
            <person name="Ishibashi T."/>
            <person name="Yamashita H."/>
            <person name="Murakawa K."/>
            <person name="Fujimori K."/>
            <person name="Tanai H."/>
            <person name="Kimata M."/>
            <person name="Watanabe M."/>
            <person name="Hiraoka S."/>
            <person name="Chiba Y."/>
            <person name="Ishida S."/>
            <person name="Ono Y."/>
            <person name="Takiguchi S."/>
            <person name="Watanabe S."/>
            <person name="Yosida M."/>
            <person name="Hotuta T."/>
            <person name="Kusano J."/>
            <person name="Kanehori K."/>
            <person name="Takahashi-Fujii A."/>
            <person name="Hara H."/>
            <person name="Tanase T.-O."/>
            <person name="Nomura Y."/>
            <person name="Togiya S."/>
            <person name="Komai F."/>
            <person name="Hara R."/>
            <person name="Takeuchi K."/>
            <person name="Arita M."/>
            <person name="Imose N."/>
            <person name="Musashino K."/>
            <person name="Yuuki H."/>
            <person name="Oshima A."/>
            <person name="Sasaki N."/>
            <person name="Aotsuka S."/>
            <person name="Yoshikawa Y."/>
            <person name="Matsunawa H."/>
            <person name="Ichihara T."/>
            <person name="Shiohata N."/>
            <person name="Sano S."/>
            <person name="Moriya S."/>
            <person name="Momiyama H."/>
            <person name="Satoh N."/>
            <person name="Takami S."/>
            <person name="Terashima Y."/>
            <person name="Suzuki O."/>
            <person name="Nakagawa S."/>
            <person name="Senoh A."/>
            <person name="Mizoguchi H."/>
            <person name="Goto Y."/>
            <person name="Shimizu F."/>
            <person name="Wakebe H."/>
            <person name="Hishigaki H."/>
            <person name="Watanabe T."/>
            <person name="Sugiyama A."/>
            <person name="Takemoto M."/>
            <person name="Kawakami B."/>
            <person name="Yamazaki M."/>
            <person name="Watanabe K."/>
            <person name="Kumagai A."/>
            <person name="Itakura S."/>
            <person name="Fukuzumi Y."/>
            <person name="Fujimori Y."/>
            <person name="Komiyama M."/>
            <person name="Tashiro H."/>
            <person name="Tanigami A."/>
            <person name="Fujiwara T."/>
            <person name="Ono T."/>
            <person name="Yamada K."/>
            <person name="Fujii Y."/>
            <person name="Ozaki K."/>
            <person name="Hirao M."/>
            <person name="Ohmori Y."/>
            <person name="Kawabata A."/>
            <person name="Hikiji T."/>
            <person name="Kobatake N."/>
            <person name="Inagaki H."/>
            <person name="Ikema Y."/>
            <person name="Okamoto S."/>
            <person name="Okitani R."/>
            <person name="Kawakami T."/>
            <person name="Noguchi S."/>
            <person name="Itoh T."/>
            <person name="Shigeta K."/>
            <person name="Senba T."/>
            <person name="Matsumura K."/>
            <person name="Nakajima Y."/>
            <person name="Mizuno T."/>
            <person name="Morinaga M."/>
            <person name="Sasaki M."/>
            <person name="Togashi T."/>
            <person name="Oyama M."/>
            <person name="Hata H."/>
            <person name="Watanabe M."/>
            <person name="Komatsu T."/>
            <person name="Mizushima-Sugano J."/>
            <person name="Satoh T."/>
            <person name="Shirai Y."/>
            <person name="Takahashi Y."/>
            <person name="Nakagawa K."/>
            <person name="Okumura K."/>
            <person name="Nagase T."/>
            <person name="Nomura N."/>
            <person name="Kikuchi H."/>
            <person name="Masuho Y."/>
            <person name="Yamashita R."/>
            <person name="Nakai K."/>
            <person name="Yada T."/>
            <person name="Nakamura Y."/>
            <person name="Ohara O."/>
            <person name="Isogai T."/>
            <person name="Sugano S."/>
        </authorList>
    </citation>
    <scope>NUCLEOTIDE SEQUENCE [LARGE SCALE MRNA]</scope>
    <scope>VARIANT THR-2</scope>
    <source>
        <tissue>Placenta</tissue>
    </source>
</reference>
<reference key="3">
    <citation type="journal article" date="2004" name="Genome Res.">
        <title>The status, quality, and expansion of the NIH full-length cDNA project: the Mammalian Gene Collection (MGC).</title>
        <authorList>
            <consortium name="The MGC Project Team"/>
        </authorList>
    </citation>
    <scope>NUCLEOTIDE SEQUENCE [LARGE SCALE MRNA]</scope>
    <source>
        <tissue>Testis</tissue>
    </source>
</reference>
<reference key="4">
    <citation type="journal article" date="1994" name="J. Biol. Chem.">
        <title>Identification of type I receptors for osteogenic protein-1 and bone morphogenetic protein-4.</title>
        <authorList>
            <person name="ten Dijke P."/>
            <person name="Yamashita H."/>
            <person name="Sampath T.K."/>
            <person name="Reddi A.H."/>
            <person name="Estevez M."/>
            <person name="Riddle D.L."/>
            <person name="Ichijo H."/>
            <person name="Heldin C.H."/>
            <person name="Miyazono K."/>
        </authorList>
    </citation>
    <scope>INTERACTION WITH BMP4</scope>
</reference>
<reference key="5">
    <citation type="journal article" date="2009" name="Mol. Biol. Cell">
        <title>The transforming growth factor-beta type III receptor mediates distinct subcellular trafficking and downstream signaling of activin-like kinase (ALK)3 and ALK6 receptors.</title>
        <authorList>
            <person name="Lee N.Y."/>
            <person name="Kirkbride K.C."/>
            <person name="Sheu R.D."/>
            <person name="Blobe G.C."/>
        </authorList>
    </citation>
    <scope>INTERACTION WITH TGFBR3</scope>
    <scope>SUBCELLULAR LOCATION</scope>
</reference>
<reference key="6">
    <citation type="journal article" date="2011" name="Mol. Cell. Biol.">
        <title>TSC-22 promotes transforming growth factor beta-mediated cardiac myofibroblast differentiation by antagonizing Smad7 activity.</title>
        <authorList>
            <person name="Yan X."/>
            <person name="Zhang J."/>
            <person name="Pan L."/>
            <person name="Wang P."/>
            <person name="Xue H."/>
            <person name="Zhang L."/>
            <person name="Gao X."/>
            <person name="Zhao X."/>
            <person name="Ning Y."/>
            <person name="Chen Y.G."/>
        </authorList>
    </citation>
    <scope>INTERACTION WITH TSC22D1</scope>
</reference>
<reference key="7">
    <citation type="journal article" date="2012" name="Biochemistry">
        <title>Structure of the Alk1 extracellular domain and characterization of its bone morphogenetic protein (BMP) binding properties.</title>
        <authorList>
            <person name="Mahlawat P."/>
            <person name="Ilangovan U."/>
            <person name="Biswas T."/>
            <person name="Sun L.Z."/>
            <person name="Hinck A.P."/>
        </authorList>
    </citation>
    <scope>INTERACTION WITH BMP2</scope>
    <scope>MUTAGENESIS OF 107-ASP--GLN-109</scope>
</reference>
<reference key="8">
    <citation type="journal article" date="2013" name="PLoS Genet.">
        <title>A GDF5 point mutation strikes twice--causing BDA1 and SYNS2.</title>
        <authorList>
            <person name="Degenkolbe E."/>
            <person name="Konig J."/>
            <person name="Zimmer J."/>
            <person name="Walther M."/>
            <person name="Reissner C."/>
            <person name="Nickel J."/>
            <person name="Ploger F."/>
            <person name="Raspopovic J."/>
            <person name="Sharpe J."/>
            <person name="Dathe K."/>
            <person name="Hecht J.T."/>
            <person name="Mundlos S."/>
            <person name="Doelken S.C."/>
            <person name="Seemann P."/>
        </authorList>
    </citation>
    <scope>INTERACTION WITH GDF5</scope>
</reference>
<reference key="9">
    <citation type="journal article" date="2020" name="Blood">
        <title>Erythroferrone lowers hepcidin by sequestering BMP2/6 heterodimer from binding to the BMP type I receptor ALK3.</title>
        <authorList>
            <person name="Wang C.Y."/>
            <person name="Xu Y."/>
            <person name="Traeger L."/>
            <person name="Dogan D.Y."/>
            <person name="Xiao X."/>
            <person name="Steinbicker A.U."/>
            <person name="Babitt J.L."/>
        </authorList>
    </citation>
    <scope>INTERACTION WITH BMP2 AND BMP6</scope>
</reference>
<reference key="10">
    <citation type="journal article" date="2021" name="Am. J. Hum. Genet.">
        <title>SCUBE3 loss-of-function causes a recognizable recessive developmental disorder due to defective bone morphogenetic protein signaling.</title>
        <authorList>
            <consortium name="Genomics England Research Consortium"/>
            <person name="Lin Y.C."/>
            <person name="Niceta M."/>
            <person name="Muto V."/>
            <person name="Vona B."/>
            <person name="Pagnamenta A.T."/>
            <person name="Maroofian R."/>
            <person name="Beetz C."/>
            <person name="van Duyvenvoorde H."/>
            <person name="Dentici M.L."/>
            <person name="Lauffer P."/>
            <person name="Vallian S."/>
            <person name="Ciolfi A."/>
            <person name="Pizzi S."/>
            <person name="Bauer P."/>
            <person name="Gruening N.M."/>
            <person name="Bellacchio E."/>
            <person name="Del Fattore A."/>
            <person name="Petrini S."/>
            <person name="Shaheen R."/>
            <person name="Tiosano D."/>
            <person name="Halloun R."/>
            <person name="Pode-Shakked B."/>
            <person name="Albayrak H.M."/>
            <person name="Isik E."/>
            <person name="Wit J.M."/>
            <person name="Dittrich M."/>
            <person name="Freire B.L."/>
            <person name="Bertola D.R."/>
            <person name="Jorge A.A.L."/>
            <person name="Barel O."/>
            <person name="Sabir A.H."/>
            <person name="Al Tenaiji A.M.J."/>
            <person name="Taji S.M."/>
            <person name="Al-Sannaa N."/>
            <person name="Al-Abdulwahed H."/>
            <person name="Digilio M.C."/>
            <person name="Irving M."/>
            <person name="Anikster Y."/>
            <person name="Bhavani G.S.L."/>
            <person name="Girisha K.M."/>
            <person name="Haaf T."/>
            <person name="Taylor J.C."/>
            <person name="Dallapiccola B."/>
            <person name="Alkuraya F.S."/>
            <person name="Yang R.B."/>
            <person name="Tartaglia M."/>
        </authorList>
    </citation>
    <scope>INTERACTION WITH SCUBE3</scope>
</reference>
<reference key="11">
    <citation type="journal article" date="2000" name="Nat. Struct. Biol.">
        <title>Crystal structure of the BMP-2-BRIA ectodomain complex.</title>
        <authorList>
            <person name="Kirsch T."/>
            <person name="Sebald W."/>
            <person name="Dreyer M.K."/>
        </authorList>
    </citation>
    <scope>X-RAY CRYSTALLOGRAPHY (2.9 ANGSTROMS) OF 55-143 IN COMPLEX WITH BMP2</scope>
    <scope>DISULFIDE BOND</scope>
    <scope>INTERACTION WITH BMP2</scope>
</reference>
<reference evidence="29" key="12">
    <citation type="journal article" date="2004" name="Nat. Struct. Mol. Biol.">
        <title>Molecular recognition of BMP-2 and BMP receptor IA.</title>
        <authorList>
            <person name="Keller S."/>
            <person name="Nickel J."/>
            <person name="Zhang J.L."/>
            <person name="Sebald W."/>
            <person name="Mueller T.D."/>
        </authorList>
    </citation>
    <scope>X-RAY CRYSTALLOGRAPHY (1.86 ANGSTROMS) OF 24-152</scope>
    <scope>INTERACTION WITH BMP2</scope>
</reference>
<reference evidence="30 31" key="13">
    <citation type="journal article" date="2007" name="BMC Struct. Biol.">
        <title>A silent H-bond can be mutationally activated for high-affinity interaction of BMP-2 and activin type IIB receptor.</title>
        <authorList>
            <person name="Weber D."/>
            <person name="Kotzsch A."/>
            <person name="Nickel J."/>
            <person name="Harth S."/>
            <person name="Seher A."/>
            <person name="Mueller U."/>
            <person name="Sebald W."/>
            <person name="Mueller T.D."/>
        </authorList>
    </citation>
    <scope>X-RAY CRYSTALLOGRAPHY (1.85 ANGSTROMS) OF 24-152</scope>
    <scope>INTERACTION WITH BMP2</scope>
</reference>
<reference key="14">
    <citation type="journal article" date="2001" name="Nat. Genet.">
        <title>Germline mutations of the gene encoding bone morphogenetic protein receptor 1A in juvenile polyposis.</title>
        <authorList>
            <person name="Howe J.R."/>
            <person name="Bair J.L."/>
            <person name="Sayed M.G."/>
            <person name="Anderson M.E."/>
            <person name="Mitros F.A."/>
            <person name="Petersen G.M."/>
            <person name="Velculescu V.E."/>
            <person name="Traverso G."/>
            <person name="Vogelstein B."/>
        </authorList>
    </citation>
    <scope>DISEASE</scope>
</reference>
<reference key="15">
    <citation type="journal article" date="2008" name="Biochemistry">
        <title>The solution structure of BMPR-IA reveals a local disorder-to-order transition upon BMP-2 binding.</title>
        <authorList>
            <person name="Klages J."/>
            <person name="Kotzsch A."/>
            <person name="Coles M."/>
            <person name="Sebald W."/>
            <person name="Nickel J."/>
            <person name="Muller T."/>
            <person name="Kessler H."/>
        </authorList>
    </citation>
    <scope>STRUCTURE BY NMR OF 51-152</scope>
    <scope>DISULFIDE BONDS</scope>
    <scope>INTERACTION WITH BMP2</scope>
</reference>
<reference key="16">
    <citation type="journal article" date="2001" name="Am. J. Hum. Genet.">
        <title>Germline mutations in BMPR1A/ALK3 cause a subset of cases of juvenile polyposis syndrome and of Cowden and Bannayan-Riley-Ruvalcaba syndromes.</title>
        <authorList>
            <person name="Zhou X.-P."/>
            <person name="Woodford-Richens K."/>
            <person name="Lehtonen R."/>
            <person name="Kurose K."/>
            <person name="Aldred M."/>
            <person name="Hampel H."/>
            <person name="Launonen V."/>
            <person name="Virta S."/>
            <person name="Pilarski R."/>
            <person name="Salovaara R."/>
            <person name="Bodmer W.F."/>
            <person name="Conrad B.A."/>
            <person name="Dunlop M."/>
            <person name="Hodgson S.V."/>
            <person name="Iwama T."/>
            <person name="Jaervinen H."/>
            <person name="Kellokumpu I."/>
            <person name="Kim J.C."/>
            <person name="Leggett B."/>
            <person name="Markie D."/>
            <person name="Mecklin J.-P."/>
            <person name="Neale K."/>
            <person name="Phillips R."/>
            <person name="Piris J."/>
            <person name="Rozen P."/>
            <person name="Houlston R.S."/>
            <person name="Aaltonen L.A."/>
            <person name="Tomlinson I.P.M."/>
            <person name="Eng C."/>
        </authorList>
    </citation>
    <scope>VARIANTS JPS ARG-124; ASP-338 AND TYR-376</scope>
</reference>
<reference key="17">
    <citation type="journal article" date="2002" name="Ann. Surg. Oncol.">
        <title>Germline SMAD4 or BMPR1A mutations and phenotype of juvenile polyposis.</title>
        <authorList>
            <person name="Sayed M.G."/>
            <person name="Ahmed A.F."/>
            <person name="Ringold J.R."/>
            <person name="Anderson M.E."/>
            <person name="Bair J.L."/>
            <person name="Mitros F.A."/>
            <person name="Lynch H.T."/>
            <person name="Tinley S.T."/>
            <person name="Petersen G.M."/>
            <person name="Giardiello F.M."/>
            <person name="Vogelstein B."/>
            <person name="Howe J.R."/>
        </authorList>
    </citation>
    <scope>VARIANTS JPS ASP-62; TYR-82 AND CYS-443</scope>
</reference>
<reference key="18">
    <citation type="journal article" date="2002" name="Hum. Genet.">
        <title>Juvenile polyposis: massive gastric polyposis is more common in MADH4 mutation carriers than in BMPR1A mutation carriers.</title>
        <authorList>
            <person name="Friedl W."/>
            <person name="Uhlhaas S."/>
            <person name="Schulmann K."/>
            <person name="Stolte M."/>
            <person name="Loff S."/>
            <person name="Back W."/>
            <person name="Mangold E."/>
            <person name="Stern M."/>
            <person name="Knaebel H.P."/>
            <person name="Sutter C."/>
            <person name="Weber R.G."/>
            <person name="Pistorius S."/>
            <person name="Burger B."/>
            <person name="Propping P."/>
        </authorList>
    </citation>
    <scope>VARIANT JPS ARG-130</scope>
</reference>
<reference key="19">
    <citation type="journal article" date="2003" name="Clin. Genet.">
        <title>Identification of a novel BMPR1A germline mutation in a Korean juvenile polyposis patient without SMAD4 mutation.</title>
        <authorList>
            <person name="Kim I.J."/>
            <person name="Park J.H."/>
            <person name="Kang H.C."/>
            <person name="Kim K.H."/>
            <person name="Kim J.H."/>
            <person name="Ku J.L."/>
            <person name="Kang S.B."/>
            <person name="Park S.Y."/>
            <person name="Lee J.S."/>
            <person name="Park J.G."/>
        </authorList>
    </citation>
    <scope>VARIANT JPS THR-470</scope>
</reference>
<reference key="20">
    <citation type="journal article" date="2006" name="Am. J. Hum. Genet.">
        <title>Contiguous gene deletion within chromosome arm 10q is associated with juvenile polyposis of infancy, reflecting cooperation between the BMPR1A and PTEN tumor-suppressor genes.</title>
        <authorList>
            <person name="Delnatte C."/>
            <person name="Sanlaville D."/>
            <person name="Mougenot J.-F."/>
            <person name="Vermeesch J.-R."/>
            <person name="Houdayer C."/>
            <person name="Blois M.-C."/>
            <person name="Genevieve D."/>
            <person name="Goulet O."/>
            <person name="Fryns J.-P."/>
            <person name="Jaubert F."/>
            <person name="Vekemans M."/>
            <person name="Lyonnet S."/>
            <person name="Romana S."/>
            <person name="Eng C."/>
            <person name="Stoppa-Lyonnet D."/>
        </authorList>
    </citation>
    <scope>INVOLVEMENT IN JUVENILE POLYPOSIS OF INFANCY</scope>
</reference>
<reference key="21">
    <citation type="journal article" date="2006" name="J. Med. Genet.">
        <title>Mapping of hereditary mixed polyposis syndrome (HMPS) to chromosome 10q23 by genomewide high-density single nucleotide polymorphism (SNP) scan and identification of BMPR1A loss of function.</title>
        <authorList>
            <person name="Cao X."/>
            <person name="Eu K.W."/>
            <person name="Kumarasinghe M.P."/>
            <person name="Li H.H."/>
            <person name="Loi C."/>
            <person name="Cheah P.Y."/>
        </authorList>
    </citation>
    <scope>INVOLVEMENT IN HMPS2</scope>
</reference>
<reference key="22">
    <citation type="journal article" date="2007" name="Nature">
        <title>Patterns of somatic mutation in human cancer genomes.</title>
        <authorList>
            <person name="Greenman C."/>
            <person name="Stephens P."/>
            <person name="Smith R."/>
            <person name="Dalgliesh G.L."/>
            <person name="Hunter C."/>
            <person name="Bignell G."/>
            <person name="Davies H."/>
            <person name="Teague J."/>
            <person name="Butler A."/>
            <person name="Stevens C."/>
            <person name="Edkins S."/>
            <person name="O'Meara S."/>
            <person name="Vastrik I."/>
            <person name="Schmidt E.E."/>
            <person name="Avis T."/>
            <person name="Barthorpe S."/>
            <person name="Bhamra G."/>
            <person name="Buck G."/>
            <person name="Choudhury B."/>
            <person name="Clements J."/>
            <person name="Cole J."/>
            <person name="Dicks E."/>
            <person name="Forbes S."/>
            <person name="Gray K."/>
            <person name="Halliday K."/>
            <person name="Harrison R."/>
            <person name="Hills K."/>
            <person name="Hinton J."/>
            <person name="Jenkinson A."/>
            <person name="Jones D."/>
            <person name="Menzies A."/>
            <person name="Mironenko T."/>
            <person name="Perry J."/>
            <person name="Raine K."/>
            <person name="Richardson D."/>
            <person name="Shepherd R."/>
            <person name="Small A."/>
            <person name="Tofts C."/>
            <person name="Varian J."/>
            <person name="Webb T."/>
            <person name="West S."/>
            <person name="Widaa S."/>
            <person name="Yates A."/>
            <person name="Cahill D.P."/>
            <person name="Louis D.N."/>
            <person name="Goldstraw P."/>
            <person name="Nicholson A.G."/>
            <person name="Brasseur F."/>
            <person name="Looijenga L."/>
            <person name="Weber B.L."/>
            <person name="Chiew Y.-E."/>
            <person name="DeFazio A."/>
            <person name="Greaves M.F."/>
            <person name="Green A.R."/>
            <person name="Campbell P."/>
            <person name="Birney E."/>
            <person name="Easton D.F."/>
            <person name="Chenevix-Trench G."/>
            <person name="Tan M.-H."/>
            <person name="Khoo S.K."/>
            <person name="Teh B.T."/>
            <person name="Yuen S.T."/>
            <person name="Leung S.Y."/>
            <person name="Wooster R."/>
            <person name="Futreal P.A."/>
            <person name="Stratton M.R."/>
        </authorList>
    </citation>
    <scope>VARIANTS [LARGE SCALE ANALYSIS] THR-2; TYR-58; CYS-443; MET-450 AND GLN-486</scope>
</reference>
<reference key="23">
    <citation type="journal article" date="2015" name="Fam. Cancer">
        <title>A novel POLE mutation associated with cancers of colon, pancreas, ovaries and small intestine.</title>
        <authorList>
            <person name="Hansen M.F."/>
            <person name="Johansen J."/>
            <person name="Bjoernevoll I."/>
            <person name="Sylvander A.E."/>
            <person name="Steinsbekk K.S."/>
            <person name="Saetrom P."/>
            <person name="Sandvik A.K."/>
            <person name="Drabloes F."/>
            <person name="Sjursen W."/>
        </authorList>
    </citation>
    <scope>VARIANT THR-460</scope>
</reference>
<comment type="function">
    <text evidence="2">On ligand binding, forms a receptor complex consisting of two type II and two type I transmembrane serine/threonine kinases. Type II receptors phosphorylate and activate type I receptors which autophosphorylate, then bind and activate SMAD transcriptional regulators. Receptor for BMP2, BMP4, GDF5 and GDF6. Positively regulates chondrocyte differentiation through GDF5 interaction. Mediates induction of adipogenesis by GDF6. May promote the expression of HAMP, potentially via its interaction with BMP2 (By similarity).</text>
</comment>
<comment type="catalytic activity">
    <reaction>
        <text>L-threonyl-[receptor-protein] + ATP = O-phospho-L-threonyl-[receptor-protein] + ADP + H(+)</text>
        <dbReference type="Rhea" id="RHEA:44880"/>
        <dbReference type="Rhea" id="RHEA-COMP:11024"/>
        <dbReference type="Rhea" id="RHEA-COMP:11025"/>
        <dbReference type="ChEBI" id="CHEBI:15378"/>
        <dbReference type="ChEBI" id="CHEBI:30013"/>
        <dbReference type="ChEBI" id="CHEBI:30616"/>
        <dbReference type="ChEBI" id="CHEBI:61977"/>
        <dbReference type="ChEBI" id="CHEBI:456216"/>
        <dbReference type="EC" id="2.7.11.30"/>
    </reaction>
</comment>
<comment type="catalytic activity">
    <reaction>
        <text>L-seryl-[receptor-protein] + ATP = O-phospho-L-seryl-[receptor-protein] + ADP + H(+)</text>
        <dbReference type="Rhea" id="RHEA:18673"/>
        <dbReference type="Rhea" id="RHEA-COMP:11022"/>
        <dbReference type="Rhea" id="RHEA-COMP:11023"/>
        <dbReference type="ChEBI" id="CHEBI:15378"/>
        <dbReference type="ChEBI" id="CHEBI:29999"/>
        <dbReference type="ChEBI" id="CHEBI:30616"/>
        <dbReference type="ChEBI" id="CHEBI:83421"/>
        <dbReference type="ChEBI" id="CHEBI:456216"/>
        <dbReference type="EC" id="2.7.11.30"/>
    </reaction>
</comment>
<comment type="cofactor">
    <cofactor evidence="1">
        <name>Mg(2+)</name>
        <dbReference type="ChEBI" id="CHEBI:18420"/>
    </cofactor>
    <cofactor evidence="1">
        <name>Mn(2+)</name>
        <dbReference type="ChEBI" id="CHEBI:29035"/>
    </cofactor>
</comment>
<comment type="subunit">
    <text evidence="7 14 16 18 19 20 22 24 25 26">Interacts with low affinity with GDF5; positively regulates chondrocyte differentiation (PubMed:24098149). Interacts with BMP4 (PubMed:8006002). Interacts with SCUBE3 (PubMed:33308444). Interacts with TSC22D1/TSC-22 (PubMed:21791611). Interacts with BMP2; the interaction may induce HAMP expression (PubMed:10881198, PubMed:15064755, PubMed:17295905, PubMed:18937504, PubMed:31800957). Interacts with BMP6 (PubMed:31800957). Interacts with heterodimers composed of BMP2 and BMP6 in vitro; the interaction may induce HAMP expression (PubMed:31800957). Interacts with TGFBR3 (PubMed:19726563).</text>
</comment>
<comment type="interaction">
    <interactant intactId="EBI-1029237">
        <id>P36894</id>
    </interactant>
    <interactant intactId="EBI-1029262">
        <id>P12643</id>
        <label>BMP2</label>
    </interactant>
    <organismsDiffer>false</organismsDiffer>
    <experiments>17</experiments>
</comment>
<comment type="interaction">
    <interactant intactId="EBI-1029237">
        <id>P36894</id>
    </interactant>
    <interactant intactId="EBI-1998134">
        <id>P12644</id>
        <label>BMP4</label>
    </interactant>
    <organismsDiffer>false</organismsDiffer>
    <experiments>2</experiments>
</comment>
<comment type="interaction">
    <interactant intactId="EBI-1029237">
        <id>P36894</id>
    </interactant>
    <interactant intactId="EBI-8571476">
        <id>P43026</id>
        <label>GDF5</label>
    </interactant>
    <organismsDiffer>false</organismsDiffer>
    <experiments>4</experiments>
</comment>
<comment type="subcellular location">
    <subcellularLocation>
        <location evidence="19">Cell membrane</location>
        <topology evidence="3">Single-pass type I membrane protein</topology>
    </subcellularLocation>
    <subcellularLocation>
        <location evidence="2">Cell surface</location>
    </subcellularLocation>
</comment>
<comment type="tissue specificity">
    <text>Highly expressed in skeletal muscle.</text>
</comment>
<comment type="PTM">
    <text evidence="2">Glycosylated.</text>
</comment>
<comment type="disease" evidence="9 10 11 12">
    <disease id="DI-01854">
        <name>Juvenile polyposis syndrome</name>
        <acronym>JPS</acronym>
        <description>Autosomal dominant gastrointestinal hamartomatous polyposis syndrome in which patients are at risk for developing gastrointestinal cancers. The lesions are typified by a smooth histological appearance, predominant stroma, cystic spaces and lack of a smooth muscle core. Multiple juvenile polyps usually occur in a number of Mendelian disorders. Sometimes, these polyps occur without associated features as in JPS; here, polyps tend to occur in the large bowel and are associated with an increased risk of colon and other gastrointestinal cancers.</description>
        <dbReference type="MIM" id="174900"/>
    </disease>
    <text>The disease is caused by variants affecting the gene represented in this entry.</text>
</comment>
<comment type="disease" evidence="15">
    <disease id="DI-01724">
        <name>Polyposis syndrome, mixed hereditary 2</name>
        <acronym>HMPS2</acronym>
        <description>A disease is characterized by atypical juvenile polyps, colonic adenomas, and colorectal carcinomas.</description>
        <dbReference type="MIM" id="610069"/>
    </disease>
    <text>The disease is caused by variants affecting the gene represented in this entry.</text>
</comment>
<comment type="disease">
    <text evidence="8 15">A microdeletion of chromosome 10q23 involving BMPR1A and PTEN is a cause of chromosome 10q23 deletion syndrome, which shows overlapping features of the following three disorders: Bannayan-Zonana syndrome, Cowden disease and juvenile polyposis syndrome.</text>
</comment>
<comment type="similarity">
    <text evidence="28">Belongs to the protein kinase superfamily. TKL Ser/Thr protein kinase family. TGFB receptor subfamily.</text>
</comment>
<proteinExistence type="evidence at protein level"/>
<feature type="signal peptide" evidence="3">
    <location>
        <begin position="1"/>
        <end position="23"/>
    </location>
</feature>
<feature type="chain" id="PRO_0000024410" description="Bone morphogenetic protein receptor type-1A">
    <location>
        <begin position="24"/>
        <end position="532"/>
    </location>
</feature>
<feature type="topological domain" description="Extracellular" evidence="3">
    <location>
        <begin position="24"/>
        <end position="152"/>
    </location>
</feature>
<feature type="transmembrane region" description="Helical" evidence="3">
    <location>
        <begin position="153"/>
        <end position="176"/>
    </location>
</feature>
<feature type="topological domain" description="Cytoplasmic" evidence="3">
    <location>
        <begin position="177"/>
        <end position="532"/>
    </location>
</feature>
<feature type="domain" description="GS" evidence="5">
    <location>
        <begin position="204"/>
        <end position="233"/>
    </location>
</feature>
<feature type="domain" description="Protein kinase" evidence="4">
    <location>
        <begin position="234"/>
        <end position="525"/>
    </location>
</feature>
<feature type="region of interest" description="Mediates specificity for BMP ligand" evidence="21">
    <location>
        <begin position="107"/>
        <end position="109"/>
    </location>
</feature>
<feature type="active site" description="Proton acceptor" evidence="4 6">
    <location>
        <position position="362"/>
    </location>
</feature>
<feature type="binding site" evidence="4">
    <location>
        <begin position="240"/>
        <end position="248"/>
    </location>
    <ligand>
        <name>ATP</name>
        <dbReference type="ChEBI" id="CHEBI:30616"/>
    </ligand>
</feature>
<feature type="binding site" evidence="4">
    <location>
        <position position="261"/>
    </location>
    <ligand>
        <name>ATP</name>
        <dbReference type="ChEBI" id="CHEBI:30616"/>
    </ligand>
</feature>
<feature type="glycosylation site" description="N-linked (GlcNAc...) asparagine" evidence="3">
    <location>
        <position position="73"/>
    </location>
</feature>
<feature type="disulfide bond" evidence="7 18">
    <location>
        <begin position="61"/>
        <end position="82"/>
    </location>
</feature>
<feature type="disulfide bond" evidence="7 18">
    <location>
        <begin position="63"/>
        <end position="67"/>
    </location>
</feature>
<feature type="disulfide bond" evidence="7 18">
    <location>
        <begin position="76"/>
        <end position="100"/>
    </location>
</feature>
<feature type="disulfide bond" evidence="7 18">
    <location>
        <begin position="110"/>
        <end position="124"/>
    </location>
</feature>
<feature type="disulfide bond" evidence="7 18">
    <location>
        <begin position="125"/>
        <end position="130"/>
    </location>
</feature>
<feature type="sequence variant" id="VAR_041397" description="In dbSNP:rs11528010." evidence="13 17 27">
    <original>P</original>
    <variation>T</variation>
    <location>
        <position position="2"/>
    </location>
</feature>
<feature type="sequence variant" id="VAR_041398" description="In a renal clear cell carcinoma sample; somatic mutation." evidence="17">
    <original>F</original>
    <variation>Y</variation>
    <location>
        <position position="58"/>
    </location>
</feature>
<feature type="sequence variant" id="VAR_022828" description="In JPS." evidence="11">
    <original>Y</original>
    <variation>D</variation>
    <location>
        <position position="62"/>
    </location>
</feature>
<feature type="sequence variant" id="VAR_022829" description="In JPS." evidence="11">
    <original>C</original>
    <variation>Y</variation>
    <location>
        <position position="82"/>
    </location>
</feature>
<feature type="sequence variant" id="VAR_015533" description="In JPS; dbSNP:rs199476087." evidence="9">
    <original>C</original>
    <variation>R</variation>
    <location>
        <position position="124"/>
    </location>
</feature>
<feature type="sequence variant" id="VAR_022830" description="In JPS; dbSNP:rs1131691168." evidence="10">
    <original>C</original>
    <variation>R</variation>
    <location>
        <position position="130"/>
    </location>
</feature>
<feature type="sequence variant" id="VAR_015534" description="In JPS; dbSNP:rs199476086." evidence="9">
    <original>A</original>
    <variation>D</variation>
    <location>
        <position position="338"/>
    </location>
</feature>
<feature type="sequence variant" id="VAR_015535" description="In JPS; dbSNP:rs199476088." evidence="9">
    <original>C</original>
    <variation>Y</variation>
    <location>
        <position position="376"/>
    </location>
</feature>
<feature type="sequence variant" id="VAR_022831" description="In JPS; dbSNP:rs35619497." evidence="11 17">
    <original>R</original>
    <variation>C</variation>
    <location>
        <position position="443"/>
    </location>
</feature>
<feature type="sequence variant" id="VAR_041399" description="In dbSNP:rs55932635." evidence="17">
    <original>V</original>
    <variation>M</variation>
    <location>
        <position position="450"/>
    </location>
</feature>
<feature type="sequence variant" id="VAR_077353" description="Found in a patient with tubular adenoma and rectal neuroendocrine tumor; uncertain significance; dbSNP:rs758309022." evidence="23">
    <original>M</original>
    <variation>T</variation>
    <location>
        <position position="460"/>
    </location>
</feature>
<feature type="sequence variant" id="VAR_022832" description="In JPS; dbSNP:rs199476089." evidence="12">
    <original>M</original>
    <variation>T</variation>
    <location>
        <position position="470"/>
    </location>
</feature>
<feature type="sequence variant" id="VAR_041400" description="In a gastric adenocarcinoma sample; somatic mutation; dbSNP:rs752802257." evidence="17">
    <original>R</original>
    <variation>Q</variation>
    <location>
        <position position="486"/>
    </location>
</feature>
<feature type="mutagenesis site" description="Affinity for BMP2 decreased by over 200-fold." evidence="21">
    <original>DFQ</original>
    <variation>REL</variation>
    <location>
        <begin position="107"/>
        <end position="109"/>
    </location>
</feature>
<feature type="strand" evidence="32">
    <location>
        <begin position="59"/>
        <end position="62"/>
    </location>
</feature>
<feature type="strand" evidence="32">
    <location>
        <begin position="64"/>
        <end position="66"/>
    </location>
</feature>
<feature type="strand" evidence="32">
    <location>
        <begin position="75"/>
        <end position="88"/>
    </location>
</feature>
<feature type="strand" evidence="32">
    <location>
        <begin position="90"/>
        <end position="92"/>
    </location>
</feature>
<feature type="strand" evidence="32">
    <location>
        <begin position="94"/>
        <end position="101"/>
    </location>
</feature>
<feature type="helix" evidence="32">
    <location>
        <begin position="106"/>
        <end position="111"/>
    </location>
</feature>
<feature type="strand" evidence="33">
    <location>
        <begin position="116"/>
        <end position="118"/>
    </location>
</feature>
<feature type="strand" evidence="32">
    <location>
        <begin position="120"/>
        <end position="125"/>
    </location>
</feature>
<feature type="helix" evidence="32">
    <location>
        <begin position="130"/>
        <end position="133"/>
    </location>
</feature>
<accession>P36894</accession>
<accession>A8K6U9</accession>
<accession>Q8NEN8</accession>
<gene>
    <name type="primary">BMPR1A</name>
    <name type="synonym">ACVRLK3</name>
    <name type="synonym">ALK3</name>
</gene>
<sequence length="532" mass="60198">MPQLYIYIRLLGAYLFIISRVQGQNLDSMLHGTGMKSDSDQKKSENGVTLAPEDTLPFLKCYCSGHCPDDAINNTCITNGHCFAIIEEDDQGETTLASGCMKYEGSDFQCKDSPKAQLRRTIECCRTNLCNQYLQPTLPPVVIGPFFDGSIRWLVLLISMAVCIIAMIIFSSCFCYKHYCKSISSRRRYNRDLEQDEAFIPVGESLKDLIDQSQSSGSGSGLPLLVQRTIAKQIQMVRQVGKGRYGEVWMGKWRGEKVAVKVFFTTEEASWFRETEIYQTVLMRHENILGFIAADIKGTGSWTQLYLITDYHENGSLYDFLKCATLDTRALLKLAYSAACGLCHLHTEIYGTQGKPAIAHRDLKSKNILIKKNGSCCIADLGLAVKFNSDTNEVDVPLNTRVGTKRYMAPEVLDESLNKNHFQPYIMADIYSFGLIIWEMARRCITGGIVEEYQLPYYNMVPSDPSYEDMREVVCVKRLRPIVSNRWNSDECLRAVLKLMSECWAHNPASRLTALRIKKTLAKMVESQDVKI</sequence>
<protein>
    <recommendedName>
        <fullName>Bone morphogenetic protein receptor type-1A</fullName>
        <shortName>BMP type-1A receptor</shortName>
        <shortName>BMPR-1A</shortName>
        <ecNumber>2.7.11.30</ecNumber>
    </recommendedName>
    <alternativeName>
        <fullName>Activin receptor-like kinase 3</fullName>
        <shortName>ALK-3</shortName>
    </alternativeName>
    <alternativeName>
        <fullName>Serine/threonine-protein kinase receptor R5</fullName>
        <shortName>SKR5</shortName>
    </alternativeName>
    <cdAntigenName>CD292</cdAntigenName>
</protein>
<evidence type="ECO:0000250" key="1"/>
<evidence type="ECO:0000250" key="2">
    <source>
        <dbReference type="UniProtKB" id="P36895"/>
    </source>
</evidence>
<evidence type="ECO:0000255" key="3"/>
<evidence type="ECO:0000255" key="4">
    <source>
        <dbReference type="PROSITE-ProRule" id="PRU00159"/>
    </source>
</evidence>
<evidence type="ECO:0000255" key="5">
    <source>
        <dbReference type="PROSITE-ProRule" id="PRU00585"/>
    </source>
</evidence>
<evidence type="ECO:0000255" key="6">
    <source>
        <dbReference type="PROSITE-ProRule" id="PRU10027"/>
    </source>
</evidence>
<evidence type="ECO:0000269" key="7">
    <source>
    </source>
</evidence>
<evidence type="ECO:0000269" key="8">
    <source>
    </source>
</evidence>
<evidence type="ECO:0000269" key="9">
    <source>
    </source>
</evidence>
<evidence type="ECO:0000269" key="10">
    <source>
    </source>
</evidence>
<evidence type="ECO:0000269" key="11">
    <source>
    </source>
</evidence>
<evidence type="ECO:0000269" key="12">
    <source>
    </source>
</evidence>
<evidence type="ECO:0000269" key="13">
    <source>
    </source>
</evidence>
<evidence type="ECO:0000269" key="14">
    <source>
    </source>
</evidence>
<evidence type="ECO:0000269" key="15">
    <source>
    </source>
</evidence>
<evidence type="ECO:0000269" key="16">
    <source>
    </source>
</evidence>
<evidence type="ECO:0000269" key="17">
    <source>
    </source>
</evidence>
<evidence type="ECO:0000269" key="18">
    <source>
    </source>
</evidence>
<evidence type="ECO:0000269" key="19">
    <source>
    </source>
</evidence>
<evidence type="ECO:0000269" key="20">
    <source>
    </source>
</evidence>
<evidence type="ECO:0000269" key="21">
    <source>
    </source>
</evidence>
<evidence type="ECO:0000269" key="22">
    <source>
    </source>
</evidence>
<evidence type="ECO:0000269" key="23">
    <source>
    </source>
</evidence>
<evidence type="ECO:0000269" key="24">
    <source>
    </source>
</evidence>
<evidence type="ECO:0000269" key="25">
    <source>
    </source>
</evidence>
<evidence type="ECO:0000269" key="26">
    <source>
    </source>
</evidence>
<evidence type="ECO:0000269" key="27">
    <source>
    </source>
</evidence>
<evidence type="ECO:0000305" key="28"/>
<evidence type="ECO:0007744" key="29">
    <source>
        <dbReference type="PDB" id="1REW"/>
    </source>
</evidence>
<evidence type="ECO:0007744" key="30">
    <source>
        <dbReference type="PDB" id="2H62"/>
    </source>
</evidence>
<evidence type="ECO:0007744" key="31">
    <source>
        <dbReference type="PDB" id="2H64"/>
    </source>
</evidence>
<evidence type="ECO:0007829" key="32">
    <source>
        <dbReference type="PDB" id="2H62"/>
    </source>
</evidence>
<evidence type="ECO:0007829" key="33">
    <source>
        <dbReference type="PDB" id="2QJA"/>
    </source>
</evidence>
<name>BMR1A_HUMAN</name>
<dbReference type="EC" id="2.7.11.30"/>
<dbReference type="EMBL" id="Z22535">
    <property type="protein sequence ID" value="CAA80257.1"/>
    <property type="molecule type" value="mRNA"/>
</dbReference>
<dbReference type="EMBL" id="AK291764">
    <property type="protein sequence ID" value="BAF84453.1"/>
    <property type="molecule type" value="mRNA"/>
</dbReference>
<dbReference type="EMBL" id="BC028383">
    <property type="protein sequence ID" value="AAH28383.1"/>
    <property type="molecule type" value="mRNA"/>
</dbReference>
<dbReference type="CCDS" id="CCDS7378.1"/>
<dbReference type="PIR" id="I37163">
    <property type="entry name" value="I37163"/>
</dbReference>
<dbReference type="RefSeq" id="NP_001393490.1">
    <property type="nucleotide sequence ID" value="NM_001406561.1"/>
</dbReference>
<dbReference type="RefSeq" id="NP_001393491.1">
    <property type="nucleotide sequence ID" value="NM_001406562.1"/>
</dbReference>
<dbReference type="RefSeq" id="NP_001393492.1">
    <property type="nucleotide sequence ID" value="NM_001406563.1"/>
</dbReference>
<dbReference type="RefSeq" id="NP_001393493.1">
    <property type="nucleotide sequence ID" value="NM_001406564.1"/>
</dbReference>
<dbReference type="RefSeq" id="NP_001393494.1">
    <property type="nucleotide sequence ID" value="NM_001406565.1"/>
</dbReference>
<dbReference type="RefSeq" id="NP_001393495.1">
    <property type="nucleotide sequence ID" value="NM_001406566.1"/>
</dbReference>
<dbReference type="RefSeq" id="NP_001393496.1">
    <property type="nucleotide sequence ID" value="NM_001406567.1"/>
</dbReference>
<dbReference type="RefSeq" id="NP_001393497.1">
    <property type="nucleotide sequence ID" value="NM_001406568.1"/>
</dbReference>
<dbReference type="RefSeq" id="NP_001393498.1">
    <property type="nucleotide sequence ID" value="NM_001406569.1"/>
</dbReference>
<dbReference type="RefSeq" id="NP_001393499.1">
    <property type="nucleotide sequence ID" value="NM_001406570.1"/>
</dbReference>
<dbReference type="RefSeq" id="NP_001393500.1">
    <property type="nucleotide sequence ID" value="NM_001406571.1"/>
</dbReference>
<dbReference type="RefSeq" id="NP_001393501.1">
    <property type="nucleotide sequence ID" value="NM_001406572.1"/>
</dbReference>
<dbReference type="RefSeq" id="NP_001393502.1">
    <property type="nucleotide sequence ID" value="NM_001406573.1"/>
</dbReference>
<dbReference type="RefSeq" id="NP_001393503.1">
    <property type="nucleotide sequence ID" value="NM_001406574.1"/>
</dbReference>
<dbReference type="RefSeq" id="NP_001393504.1">
    <property type="nucleotide sequence ID" value="NM_001406575.1"/>
</dbReference>
<dbReference type="RefSeq" id="NP_001393505.1">
    <property type="nucleotide sequence ID" value="NM_001406576.1"/>
</dbReference>
<dbReference type="RefSeq" id="NP_001393506.1">
    <property type="nucleotide sequence ID" value="NM_001406577.1"/>
</dbReference>
<dbReference type="RefSeq" id="NP_001393507.1">
    <property type="nucleotide sequence ID" value="NM_001406578.1"/>
</dbReference>
<dbReference type="RefSeq" id="NP_001393508.1">
    <property type="nucleotide sequence ID" value="NM_001406579.1"/>
</dbReference>
<dbReference type="RefSeq" id="NP_001393509.1">
    <property type="nucleotide sequence ID" value="NM_001406580.1"/>
</dbReference>
<dbReference type="RefSeq" id="NP_001393510.1">
    <property type="nucleotide sequence ID" value="NM_001406581.1"/>
</dbReference>
<dbReference type="RefSeq" id="NP_001393511.1">
    <property type="nucleotide sequence ID" value="NM_001406582.1"/>
</dbReference>
<dbReference type="RefSeq" id="NP_004320.2">
    <property type="nucleotide sequence ID" value="NM_004329.2"/>
</dbReference>
<dbReference type="RefSeq" id="XP_011538405.1">
    <property type="nucleotide sequence ID" value="XM_011540103.2"/>
</dbReference>
<dbReference type="RefSeq" id="XP_011538406.1">
    <property type="nucleotide sequence ID" value="XM_011540104.2"/>
</dbReference>
<dbReference type="RefSeq" id="XP_047281636.1">
    <property type="nucleotide sequence ID" value="XM_047425680.1"/>
</dbReference>
<dbReference type="RefSeq" id="XP_054222620.1">
    <property type="nucleotide sequence ID" value="XM_054366645.1"/>
</dbReference>
<dbReference type="PDB" id="1ES7">
    <property type="method" value="X-ray"/>
    <property type="resolution" value="2.90 A"/>
    <property type="chains" value="B/D=55-143"/>
</dbReference>
<dbReference type="PDB" id="1REW">
    <property type="method" value="X-ray"/>
    <property type="resolution" value="1.86 A"/>
    <property type="chains" value="C/D=24-152"/>
</dbReference>
<dbReference type="PDB" id="2GOO">
    <property type="method" value="X-ray"/>
    <property type="resolution" value="2.20 A"/>
    <property type="chains" value="B/E=24-152"/>
</dbReference>
<dbReference type="PDB" id="2H62">
    <property type="method" value="X-ray"/>
    <property type="resolution" value="1.85 A"/>
    <property type="chains" value="C=24-152"/>
</dbReference>
<dbReference type="PDB" id="2H64">
    <property type="method" value="X-ray"/>
    <property type="resolution" value="1.92 A"/>
    <property type="chains" value="B=24-152"/>
</dbReference>
<dbReference type="PDB" id="2K3G">
    <property type="method" value="NMR"/>
    <property type="chains" value="A=51-152"/>
</dbReference>
<dbReference type="PDB" id="2QJ9">
    <property type="method" value="X-ray"/>
    <property type="resolution" value="2.44 A"/>
    <property type="chains" value="C/D=24-152"/>
</dbReference>
<dbReference type="PDB" id="2QJA">
    <property type="method" value="X-ray"/>
    <property type="resolution" value="2.60 A"/>
    <property type="chains" value="C/D=24-152"/>
</dbReference>
<dbReference type="PDB" id="2QJB">
    <property type="method" value="X-ray"/>
    <property type="resolution" value="2.50 A"/>
    <property type="chains" value="C/D=24-152"/>
</dbReference>
<dbReference type="PDB" id="3NH7">
    <property type="method" value="X-ray"/>
    <property type="resolution" value="2.70 A"/>
    <property type="chains" value="A/B/C/D=24-152"/>
</dbReference>
<dbReference type="PDB" id="3QB4">
    <property type="method" value="X-ray"/>
    <property type="resolution" value="2.28 A"/>
    <property type="chains" value="B/D=24-152"/>
</dbReference>
<dbReference type="PDBsum" id="1ES7"/>
<dbReference type="PDBsum" id="1REW"/>
<dbReference type="PDBsum" id="2GOO"/>
<dbReference type="PDBsum" id="2H62"/>
<dbReference type="PDBsum" id="2H64"/>
<dbReference type="PDBsum" id="2K3G"/>
<dbReference type="PDBsum" id="2QJ9"/>
<dbReference type="PDBsum" id="2QJA"/>
<dbReference type="PDBsum" id="2QJB"/>
<dbReference type="PDBsum" id="3NH7"/>
<dbReference type="PDBsum" id="3QB4"/>
<dbReference type="BMRB" id="P36894"/>
<dbReference type="SMR" id="P36894"/>
<dbReference type="BioGRID" id="107125">
    <property type="interactions" value="257"/>
</dbReference>
<dbReference type="CORUM" id="P36894"/>
<dbReference type="DIP" id="DIP-5793N"/>
<dbReference type="FunCoup" id="P36894">
    <property type="interactions" value="1712"/>
</dbReference>
<dbReference type="IntAct" id="P36894">
    <property type="interactions" value="117"/>
</dbReference>
<dbReference type="MINT" id="P36894"/>
<dbReference type="STRING" id="9606.ENSP00000361107"/>
<dbReference type="BindingDB" id="P36894"/>
<dbReference type="ChEMBL" id="CHEMBL5275"/>
<dbReference type="DrugBank" id="DB11639">
    <property type="generic name" value="Dibotermin alfa"/>
</dbReference>
<dbReference type="DrugCentral" id="P36894"/>
<dbReference type="GuidetoPHARMACOLOGY" id="1786"/>
<dbReference type="GlyCosmos" id="P36894">
    <property type="glycosylation" value="1 site, No reported glycans"/>
</dbReference>
<dbReference type="GlyGen" id="P36894">
    <property type="glycosylation" value="3 sites"/>
</dbReference>
<dbReference type="iPTMnet" id="P36894"/>
<dbReference type="PhosphoSitePlus" id="P36894"/>
<dbReference type="SwissPalm" id="P36894"/>
<dbReference type="BioMuta" id="BMPR1A"/>
<dbReference type="DMDM" id="61252444"/>
<dbReference type="jPOST" id="P36894"/>
<dbReference type="MassIVE" id="P36894"/>
<dbReference type="PaxDb" id="9606-ENSP00000361107"/>
<dbReference type="PeptideAtlas" id="P36894"/>
<dbReference type="ProteomicsDB" id="55228"/>
<dbReference type="ABCD" id="P36894">
    <property type="antibodies" value="1 sequenced antibody"/>
</dbReference>
<dbReference type="Antibodypedia" id="4524">
    <property type="antibodies" value="788 antibodies from 39 providers"/>
</dbReference>
<dbReference type="DNASU" id="657"/>
<dbReference type="Ensembl" id="ENST00000372037.8">
    <property type="protein sequence ID" value="ENSP00000361107.2"/>
    <property type="gene ID" value="ENSG00000107779.16"/>
</dbReference>
<dbReference type="Ensembl" id="ENST00000480152.3">
    <property type="protein sequence ID" value="ENSP00000483569.2"/>
    <property type="gene ID" value="ENSG00000107779.16"/>
</dbReference>
<dbReference type="Ensembl" id="ENST00000635816.2">
    <property type="protein sequence ID" value="ENSP00000489707.1"/>
    <property type="gene ID" value="ENSG00000107779.16"/>
</dbReference>
<dbReference type="Ensembl" id="ENST00000636056.2">
    <property type="protein sequence ID" value="ENSP00000490273.1"/>
    <property type="gene ID" value="ENSG00000107779.16"/>
</dbReference>
<dbReference type="Ensembl" id="ENST00000638429.1">
    <property type="protein sequence ID" value="ENSP00000492290.1"/>
    <property type="gene ID" value="ENSG00000107779.16"/>
</dbReference>
<dbReference type="Ensembl" id="ENST00000713672.1">
    <property type="protein sequence ID" value="ENSP00000518974.1"/>
    <property type="gene ID" value="ENSG00000107779.16"/>
</dbReference>
<dbReference type="Ensembl" id="ENST00000713675.1">
    <property type="protein sequence ID" value="ENSP00000518977.1"/>
    <property type="gene ID" value="ENSG00000107779.16"/>
</dbReference>
<dbReference type="GeneID" id="657"/>
<dbReference type="KEGG" id="hsa:657"/>
<dbReference type="MANE-Select" id="ENST00000372037.8">
    <property type="protein sequence ID" value="ENSP00000361107.2"/>
    <property type="RefSeq nucleotide sequence ID" value="NM_004329.3"/>
    <property type="RefSeq protein sequence ID" value="NP_004320.2"/>
</dbReference>
<dbReference type="UCSC" id="uc001kdy.4">
    <property type="organism name" value="human"/>
</dbReference>
<dbReference type="AGR" id="HGNC:1076"/>
<dbReference type="CTD" id="657"/>
<dbReference type="DisGeNET" id="657"/>
<dbReference type="GeneCards" id="BMPR1A"/>
<dbReference type="GeneReviews" id="BMPR1A"/>
<dbReference type="HGNC" id="HGNC:1076">
    <property type="gene designation" value="BMPR1A"/>
</dbReference>
<dbReference type="HPA" id="ENSG00000107779">
    <property type="expression patterns" value="Low tissue specificity"/>
</dbReference>
<dbReference type="MalaCards" id="BMPR1A"/>
<dbReference type="MIM" id="174900">
    <property type="type" value="phenotype"/>
</dbReference>
<dbReference type="MIM" id="601299">
    <property type="type" value="gene"/>
</dbReference>
<dbReference type="MIM" id="610069">
    <property type="type" value="phenotype"/>
</dbReference>
<dbReference type="MIM" id="612242">
    <property type="type" value="phenotype"/>
</dbReference>
<dbReference type="neXtProt" id="NX_P36894"/>
<dbReference type="OpenTargets" id="ENSG00000107779"/>
<dbReference type="Orphanet" id="440437">
    <property type="disease" value="Familial colorectal cancer Type X"/>
</dbReference>
<dbReference type="Orphanet" id="329971">
    <property type="disease" value="Generalized juvenile polyposis/juvenile polyposis coli"/>
</dbReference>
<dbReference type="Orphanet" id="157794">
    <property type="disease" value="Hereditary mixed polyposis syndrome"/>
</dbReference>
<dbReference type="Orphanet" id="79076">
    <property type="disease" value="Juvenile polyposis of infancy"/>
</dbReference>
<dbReference type="PharmGKB" id="PA25386"/>
<dbReference type="VEuPathDB" id="HostDB:ENSG00000107779"/>
<dbReference type="eggNOG" id="KOG2052">
    <property type="taxonomic scope" value="Eukaryota"/>
</dbReference>
<dbReference type="GeneTree" id="ENSGT00940000156225"/>
<dbReference type="HOGENOM" id="CLU_000288_8_1_1"/>
<dbReference type="InParanoid" id="P36894"/>
<dbReference type="OMA" id="GSCPNNV"/>
<dbReference type="OrthoDB" id="69842at2759"/>
<dbReference type="PAN-GO" id="P36894">
    <property type="GO annotations" value="8 GO annotations based on evolutionary models"/>
</dbReference>
<dbReference type="PhylomeDB" id="P36894"/>
<dbReference type="TreeFam" id="TF314724"/>
<dbReference type="BRENDA" id="2.7.10.2">
    <property type="organism ID" value="2681"/>
</dbReference>
<dbReference type="PathwayCommons" id="P36894"/>
<dbReference type="Reactome" id="R-HSA-201451">
    <property type="pathway name" value="Signaling by BMP"/>
</dbReference>
<dbReference type="SignaLink" id="P36894"/>
<dbReference type="SIGNOR" id="P36894"/>
<dbReference type="BioGRID-ORCS" id="657">
    <property type="hits" value="88 hits in 1193 CRISPR screens"/>
</dbReference>
<dbReference type="ChiTaRS" id="BMPR1A">
    <property type="organism name" value="human"/>
</dbReference>
<dbReference type="EvolutionaryTrace" id="P36894"/>
<dbReference type="GeneWiki" id="BMPR1A"/>
<dbReference type="GenomeRNAi" id="657"/>
<dbReference type="Pharos" id="P36894">
    <property type="development level" value="Tchem"/>
</dbReference>
<dbReference type="PRO" id="PR:P36894"/>
<dbReference type="Proteomes" id="UP000005640">
    <property type="component" value="Chromosome 10"/>
</dbReference>
<dbReference type="RNAct" id="P36894">
    <property type="molecule type" value="protein"/>
</dbReference>
<dbReference type="Bgee" id="ENSG00000107779">
    <property type="expression patterns" value="Expressed in secondary oocyte and 211 other cell types or tissues"/>
</dbReference>
<dbReference type="ExpressionAtlas" id="P36894">
    <property type="expression patterns" value="baseline and differential"/>
</dbReference>
<dbReference type="GO" id="GO:0030425">
    <property type="term" value="C:dendrite"/>
    <property type="evidence" value="ECO:0007669"/>
    <property type="project" value="Ensembl"/>
</dbReference>
<dbReference type="GO" id="GO:0009897">
    <property type="term" value="C:external side of plasma membrane"/>
    <property type="evidence" value="ECO:0000314"/>
    <property type="project" value="BHF-UCL"/>
</dbReference>
<dbReference type="GO" id="GO:1990712">
    <property type="term" value="C:HFE-transferrin receptor complex"/>
    <property type="evidence" value="ECO:0000305"/>
    <property type="project" value="BHF-UCL"/>
</dbReference>
<dbReference type="GO" id="GO:0016020">
    <property type="term" value="C:membrane"/>
    <property type="evidence" value="ECO:0000304"/>
    <property type="project" value="ProtInc"/>
</dbReference>
<dbReference type="GO" id="GO:0043025">
    <property type="term" value="C:neuronal cell body"/>
    <property type="evidence" value="ECO:0007669"/>
    <property type="project" value="Ensembl"/>
</dbReference>
<dbReference type="GO" id="GO:0005886">
    <property type="term" value="C:plasma membrane"/>
    <property type="evidence" value="ECO:0000314"/>
    <property type="project" value="BHF-UCL"/>
</dbReference>
<dbReference type="GO" id="GO:0043235">
    <property type="term" value="C:receptor complex"/>
    <property type="evidence" value="ECO:0000318"/>
    <property type="project" value="GO_Central"/>
</dbReference>
<dbReference type="GO" id="GO:0005524">
    <property type="term" value="F:ATP binding"/>
    <property type="evidence" value="ECO:0000314"/>
    <property type="project" value="HGNC-UCL"/>
</dbReference>
<dbReference type="GO" id="GO:0036122">
    <property type="term" value="F:BMP binding"/>
    <property type="evidence" value="ECO:0000353"/>
    <property type="project" value="BHF-UCL"/>
</dbReference>
<dbReference type="GO" id="GO:0098821">
    <property type="term" value="F:BMP receptor activity"/>
    <property type="evidence" value="ECO:0000314"/>
    <property type="project" value="ARUK-UCL"/>
</dbReference>
<dbReference type="GO" id="GO:0046872">
    <property type="term" value="F:metal ion binding"/>
    <property type="evidence" value="ECO:0007669"/>
    <property type="project" value="UniProtKB-KW"/>
</dbReference>
<dbReference type="GO" id="GO:0042803">
    <property type="term" value="F:protein homodimerization activity"/>
    <property type="evidence" value="ECO:0000314"/>
    <property type="project" value="BHF-UCL"/>
</dbReference>
<dbReference type="GO" id="GO:0004674">
    <property type="term" value="F:protein serine/threonine kinase activity"/>
    <property type="evidence" value="ECO:0000314"/>
    <property type="project" value="HGNC-UCL"/>
</dbReference>
<dbReference type="GO" id="GO:0046332">
    <property type="term" value="F:SMAD binding"/>
    <property type="evidence" value="ECO:0000314"/>
    <property type="project" value="HGNC-UCL"/>
</dbReference>
<dbReference type="GO" id="GO:0005025">
    <property type="term" value="F:transforming growth factor beta receptor activity, type I"/>
    <property type="evidence" value="ECO:0000314"/>
    <property type="project" value="UniProt"/>
</dbReference>
<dbReference type="GO" id="GO:0004675">
    <property type="term" value="F:transmembrane receptor protein serine/threonine kinase activity"/>
    <property type="evidence" value="ECO:0000304"/>
    <property type="project" value="Reactome"/>
</dbReference>
<dbReference type="GO" id="GO:0001525">
    <property type="term" value="P:angiogenesis"/>
    <property type="evidence" value="ECO:0000315"/>
    <property type="project" value="BHF-UCL"/>
</dbReference>
<dbReference type="GO" id="GO:0060928">
    <property type="term" value="P:atrioventricular node cell development"/>
    <property type="evidence" value="ECO:0000250"/>
    <property type="project" value="BHF-UCL"/>
</dbReference>
<dbReference type="GO" id="GO:0003171">
    <property type="term" value="P:atrioventricular valve development"/>
    <property type="evidence" value="ECO:0000250"/>
    <property type="project" value="BHF-UCL"/>
</dbReference>
<dbReference type="GO" id="GO:0030509">
    <property type="term" value="P:BMP signaling pathway"/>
    <property type="evidence" value="ECO:0000314"/>
    <property type="project" value="HGNC-UCL"/>
</dbReference>
<dbReference type="GO" id="GO:0003161">
    <property type="term" value="P:cardiac conduction system development"/>
    <property type="evidence" value="ECO:0000250"/>
    <property type="project" value="BHF-UCL"/>
</dbReference>
<dbReference type="GO" id="GO:0003215">
    <property type="term" value="P:cardiac right ventricle morphogenesis"/>
    <property type="evidence" value="ECO:0000250"/>
    <property type="project" value="BHF-UCL"/>
</dbReference>
<dbReference type="GO" id="GO:0030154">
    <property type="term" value="P:cell differentiation"/>
    <property type="evidence" value="ECO:0000318"/>
    <property type="project" value="GO_Central"/>
</dbReference>
<dbReference type="GO" id="GO:0071773">
    <property type="term" value="P:cellular response to BMP stimulus"/>
    <property type="evidence" value="ECO:0000315"/>
    <property type="project" value="BHF-UCL"/>
</dbReference>
<dbReference type="GO" id="GO:0071363">
    <property type="term" value="P:cellular response to growth factor stimulus"/>
    <property type="evidence" value="ECO:0000318"/>
    <property type="project" value="GO_Central"/>
</dbReference>
<dbReference type="GO" id="GO:0021953">
    <property type="term" value="P:central nervous system neuron differentiation"/>
    <property type="evidence" value="ECO:0007669"/>
    <property type="project" value="Ensembl"/>
</dbReference>
<dbReference type="GO" id="GO:0002062">
    <property type="term" value="P:chondrocyte differentiation"/>
    <property type="evidence" value="ECO:0007669"/>
    <property type="project" value="Ensembl"/>
</dbReference>
<dbReference type="GO" id="GO:0048589">
    <property type="term" value="P:developmental growth"/>
    <property type="evidence" value="ECO:0007669"/>
    <property type="project" value="Ensembl"/>
</dbReference>
<dbReference type="GO" id="GO:0035912">
    <property type="term" value="P:dorsal aorta morphogenesis"/>
    <property type="evidence" value="ECO:0000250"/>
    <property type="project" value="BHF-UCL"/>
</dbReference>
<dbReference type="GO" id="GO:0009950">
    <property type="term" value="P:dorsal/ventral axis specification"/>
    <property type="evidence" value="ECO:0007669"/>
    <property type="project" value="Ensembl"/>
</dbReference>
<dbReference type="GO" id="GO:0009953">
    <property type="term" value="P:dorsal/ventral pattern formation"/>
    <property type="evidence" value="ECO:0000318"/>
    <property type="project" value="GO_Central"/>
</dbReference>
<dbReference type="GO" id="GO:0007398">
    <property type="term" value="P:ectoderm development"/>
    <property type="evidence" value="ECO:0007669"/>
    <property type="project" value="Ensembl"/>
</dbReference>
<dbReference type="GO" id="GO:0042733">
    <property type="term" value="P:embryonic digit morphogenesis"/>
    <property type="evidence" value="ECO:0007669"/>
    <property type="project" value="Ensembl"/>
</dbReference>
<dbReference type="GO" id="GO:0048568">
    <property type="term" value="P:embryonic organ development"/>
    <property type="evidence" value="ECO:0000250"/>
    <property type="project" value="BHF-UCL"/>
</dbReference>
<dbReference type="GO" id="GO:0003272">
    <property type="term" value="P:endocardial cushion formation"/>
    <property type="evidence" value="ECO:0000250"/>
    <property type="project" value="BHF-UCL"/>
</dbReference>
<dbReference type="GO" id="GO:0003203">
    <property type="term" value="P:endocardial cushion morphogenesis"/>
    <property type="evidence" value="ECO:0000250"/>
    <property type="project" value="BHF-UCL"/>
</dbReference>
<dbReference type="GO" id="GO:0050673">
    <property type="term" value="P:epithelial cell proliferation"/>
    <property type="evidence" value="ECO:0007669"/>
    <property type="project" value="Ensembl"/>
</dbReference>
<dbReference type="GO" id="GO:1905285">
    <property type="term" value="P:fibrous ring of heart morphogenesis"/>
    <property type="evidence" value="ECO:0000250"/>
    <property type="project" value="BHF-UCL"/>
</dbReference>
<dbReference type="GO" id="GO:0060914">
    <property type="term" value="P:heart formation"/>
    <property type="evidence" value="ECO:0007669"/>
    <property type="project" value="Ensembl"/>
</dbReference>
<dbReference type="GO" id="GO:0035137">
    <property type="term" value="P:hindlimb morphogenesis"/>
    <property type="evidence" value="ECO:0007669"/>
    <property type="project" value="Ensembl"/>
</dbReference>
<dbReference type="GO" id="GO:0006955">
    <property type="term" value="P:immune response"/>
    <property type="evidence" value="ECO:0000315"/>
    <property type="project" value="BHF-UCL"/>
</dbReference>
<dbReference type="GO" id="GO:0001701">
    <property type="term" value="P:in utero embryonic development"/>
    <property type="evidence" value="ECO:0007669"/>
    <property type="project" value="Ensembl"/>
</dbReference>
<dbReference type="GO" id="GO:0048368">
    <property type="term" value="P:lateral mesoderm development"/>
    <property type="evidence" value="ECO:0007669"/>
    <property type="project" value="Ensembl"/>
</dbReference>
<dbReference type="GO" id="GO:0030324">
    <property type="term" value="P:lung development"/>
    <property type="evidence" value="ECO:0007669"/>
    <property type="project" value="Ensembl"/>
</dbReference>
<dbReference type="GO" id="GO:0048382">
    <property type="term" value="P:mesendoderm development"/>
    <property type="evidence" value="ECO:0007669"/>
    <property type="project" value="Ensembl"/>
</dbReference>
<dbReference type="GO" id="GO:0001707">
    <property type="term" value="P:mesoderm formation"/>
    <property type="evidence" value="ECO:0007669"/>
    <property type="project" value="Ensembl"/>
</dbReference>
<dbReference type="GO" id="GO:0003183">
    <property type="term" value="P:mitral valve morphogenesis"/>
    <property type="evidence" value="ECO:0000250"/>
    <property type="project" value="BHF-UCL"/>
</dbReference>
<dbReference type="GO" id="GO:0001880">
    <property type="term" value="P:Mullerian duct regression"/>
    <property type="evidence" value="ECO:0007669"/>
    <property type="project" value="Ensembl"/>
</dbReference>
<dbReference type="GO" id="GO:0010629">
    <property type="term" value="P:negative regulation of gene expression"/>
    <property type="evidence" value="ECO:0000250"/>
    <property type="project" value="BHF-UCL"/>
</dbReference>
<dbReference type="GO" id="GO:0051148">
    <property type="term" value="P:negative regulation of muscle cell differentiation"/>
    <property type="evidence" value="ECO:0007669"/>
    <property type="project" value="Ensembl"/>
</dbReference>
<dbReference type="GO" id="GO:0050768">
    <property type="term" value="P:negative regulation of neurogenesis"/>
    <property type="evidence" value="ECO:0007669"/>
    <property type="project" value="Ensembl"/>
</dbReference>
<dbReference type="GO" id="GO:0014912">
    <property type="term" value="P:negative regulation of smooth muscle cell migration"/>
    <property type="evidence" value="ECO:0000315"/>
    <property type="project" value="BHF-UCL"/>
</dbReference>
<dbReference type="GO" id="GO:0014032">
    <property type="term" value="P:neural crest cell development"/>
    <property type="evidence" value="ECO:0007669"/>
    <property type="project" value="Ensembl"/>
</dbReference>
<dbReference type="GO" id="GO:0021998">
    <property type="term" value="P:neural plate mediolateral regionalization"/>
    <property type="evidence" value="ECO:0007669"/>
    <property type="project" value="Ensembl"/>
</dbReference>
<dbReference type="GO" id="GO:0042475">
    <property type="term" value="P:odontogenesis of dentin-containing tooth"/>
    <property type="evidence" value="ECO:0007669"/>
    <property type="project" value="Ensembl"/>
</dbReference>
<dbReference type="GO" id="GO:0001649">
    <property type="term" value="P:osteoblast differentiation"/>
    <property type="evidence" value="ECO:0007669"/>
    <property type="project" value="Ensembl"/>
</dbReference>
<dbReference type="GO" id="GO:0003151">
    <property type="term" value="P:outflow tract morphogenesis"/>
    <property type="evidence" value="ECO:0000250"/>
    <property type="project" value="BHF-UCL"/>
</dbReference>
<dbReference type="GO" id="GO:0003148">
    <property type="term" value="P:outflow tract septum morphogenesis"/>
    <property type="evidence" value="ECO:0000250"/>
    <property type="project" value="BHF-UCL"/>
</dbReference>
<dbReference type="GO" id="GO:0048352">
    <property type="term" value="P:paraxial mesoderm structural organization"/>
    <property type="evidence" value="ECO:0007669"/>
    <property type="project" value="Ensembl"/>
</dbReference>
<dbReference type="GO" id="GO:0061626">
    <property type="term" value="P:pharyngeal arch artery morphogenesis"/>
    <property type="evidence" value="ECO:0000250"/>
    <property type="project" value="BHF-UCL"/>
</dbReference>
<dbReference type="GO" id="GO:0021983">
    <property type="term" value="P:pituitary gland development"/>
    <property type="evidence" value="ECO:0007669"/>
    <property type="project" value="Ensembl"/>
</dbReference>
<dbReference type="GO" id="GO:0030501">
    <property type="term" value="P:positive regulation of bone mineralization"/>
    <property type="evidence" value="ECO:0000315"/>
    <property type="project" value="BHF-UCL"/>
</dbReference>
<dbReference type="GO" id="GO:0060045">
    <property type="term" value="P:positive regulation of cardiac muscle cell proliferation"/>
    <property type="evidence" value="ECO:0000250"/>
    <property type="project" value="BHF-UCL"/>
</dbReference>
<dbReference type="GO" id="GO:1904414">
    <property type="term" value="P:positive regulation of cardiac ventricle development"/>
    <property type="evidence" value="ECO:0000250"/>
    <property type="project" value="BHF-UCL"/>
</dbReference>
<dbReference type="GO" id="GO:1900006">
    <property type="term" value="P:positive regulation of dendrite development"/>
    <property type="evidence" value="ECO:0000304"/>
    <property type="project" value="UniProt"/>
</dbReference>
<dbReference type="GO" id="GO:0050679">
    <property type="term" value="P:positive regulation of epithelial cell proliferation"/>
    <property type="evidence" value="ECO:0007669"/>
    <property type="project" value="Ensembl"/>
</dbReference>
<dbReference type="GO" id="GO:0010628">
    <property type="term" value="P:positive regulation of gene expression"/>
    <property type="evidence" value="ECO:0000315"/>
    <property type="project" value="BHF-UCL"/>
</dbReference>
<dbReference type="GO" id="GO:0002053">
    <property type="term" value="P:positive regulation of mesenchymal cell proliferation"/>
    <property type="evidence" value="ECO:0007669"/>
    <property type="project" value="Ensembl"/>
</dbReference>
<dbReference type="GO" id="GO:1902895">
    <property type="term" value="P:positive regulation of miRNA transcription"/>
    <property type="evidence" value="ECO:0007669"/>
    <property type="project" value="Ensembl"/>
</dbReference>
<dbReference type="GO" id="GO:0045669">
    <property type="term" value="P:positive regulation of osteoblast differentiation"/>
    <property type="evidence" value="ECO:0000315"/>
    <property type="project" value="BHF-UCL"/>
</dbReference>
<dbReference type="GO" id="GO:0060391">
    <property type="term" value="P:positive regulation of SMAD protein signal transduction"/>
    <property type="evidence" value="ECO:0000314"/>
    <property type="project" value="BHF-UCL"/>
</dbReference>
<dbReference type="GO" id="GO:0045944">
    <property type="term" value="P:positive regulation of transcription by RNA polymerase II"/>
    <property type="evidence" value="ECO:0000315"/>
    <property type="project" value="BHF-UCL"/>
</dbReference>
<dbReference type="GO" id="GO:0032915">
    <property type="term" value="P:positive regulation of transforming growth factor beta2 production"/>
    <property type="evidence" value="ECO:0000250"/>
    <property type="project" value="BHF-UCL"/>
</dbReference>
<dbReference type="GO" id="GO:1904707">
    <property type="term" value="P:positive regulation of vascular associated smooth muscle cell proliferation"/>
    <property type="evidence" value="ECO:0000315"/>
    <property type="project" value="BHF-UCL"/>
</dbReference>
<dbReference type="GO" id="GO:0060043">
    <property type="term" value="P:regulation of cardiac muscle cell proliferation"/>
    <property type="evidence" value="ECO:0000250"/>
    <property type="project" value="BHF-UCL"/>
</dbReference>
<dbReference type="GO" id="GO:2000772">
    <property type="term" value="P:regulation of cellular senescence"/>
    <property type="evidence" value="ECO:0007669"/>
    <property type="project" value="Ensembl"/>
</dbReference>
<dbReference type="GO" id="GO:0048378">
    <property type="term" value="P:regulation of lateral mesodermal cell fate specification"/>
    <property type="evidence" value="ECO:0007669"/>
    <property type="project" value="Ensembl"/>
</dbReference>
<dbReference type="GO" id="GO:0060021">
    <property type="term" value="P:roof of mouth development"/>
    <property type="evidence" value="ECO:0007669"/>
    <property type="project" value="Ensembl"/>
</dbReference>
<dbReference type="GO" id="GO:0035019">
    <property type="term" value="P:somatic stem cell population maintenance"/>
    <property type="evidence" value="ECO:0007669"/>
    <property type="project" value="Ensembl"/>
</dbReference>
<dbReference type="GO" id="GO:0001756">
    <property type="term" value="P:somitogenesis"/>
    <property type="evidence" value="ECO:0007669"/>
    <property type="project" value="Ensembl"/>
</dbReference>
<dbReference type="GO" id="GO:0048863">
    <property type="term" value="P:stem cell differentiation"/>
    <property type="evidence" value="ECO:0000250"/>
    <property type="project" value="UniProt"/>
</dbReference>
<dbReference type="GO" id="GO:0007179">
    <property type="term" value="P:transforming growth factor beta receptor signaling pathway"/>
    <property type="evidence" value="ECO:0000315"/>
    <property type="project" value="FlyBase"/>
</dbReference>
<dbReference type="GO" id="GO:0003186">
    <property type="term" value="P:tricuspid valve morphogenesis"/>
    <property type="evidence" value="ECO:0000250"/>
    <property type="project" value="BHF-UCL"/>
</dbReference>
<dbReference type="GO" id="GO:0003223">
    <property type="term" value="P:ventricular compact myocardium morphogenesis"/>
    <property type="evidence" value="ECO:0000250"/>
    <property type="project" value="BHF-UCL"/>
</dbReference>
<dbReference type="GO" id="GO:0060412">
    <property type="term" value="P:ventricular septum morphogenesis"/>
    <property type="evidence" value="ECO:0000250"/>
    <property type="project" value="BHF-UCL"/>
</dbReference>
<dbReference type="GO" id="GO:0003222">
    <property type="term" value="P:ventricular trabecula myocardium morphogenesis"/>
    <property type="evidence" value="ECO:0000250"/>
    <property type="project" value="BHF-UCL"/>
</dbReference>
<dbReference type="CDD" id="cd14220">
    <property type="entry name" value="STKc_BMPR1a"/>
    <property type="match status" value="1"/>
</dbReference>
<dbReference type="CDD" id="cd23612">
    <property type="entry name" value="TFP_LU_ECD_BMPR1A"/>
    <property type="match status" value="1"/>
</dbReference>
<dbReference type="DisProt" id="DP01990"/>
<dbReference type="FunFam" id="1.10.510.10:FF:000018">
    <property type="entry name" value="Receptor protein serine/threonine kinase"/>
    <property type="match status" value="1"/>
</dbReference>
<dbReference type="FunFam" id="2.10.60.10:FF:000001">
    <property type="entry name" value="Receptor protein serine/threonine kinase"/>
    <property type="match status" value="1"/>
</dbReference>
<dbReference type="FunFam" id="3.30.200.20:FF:000055">
    <property type="entry name" value="Receptor protein serine/threonine kinase"/>
    <property type="match status" value="1"/>
</dbReference>
<dbReference type="Gene3D" id="2.10.60.10">
    <property type="entry name" value="CD59"/>
    <property type="match status" value="1"/>
</dbReference>
<dbReference type="Gene3D" id="3.30.200.20">
    <property type="entry name" value="Phosphorylase Kinase, domain 1"/>
    <property type="match status" value="1"/>
</dbReference>
<dbReference type="Gene3D" id="1.10.510.10">
    <property type="entry name" value="Transferase(Phosphotransferase) domain 1"/>
    <property type="match status" value="1"/>
</dbReference>
<dbReference type="InterPro" id="IPR000472">
    <property type="entry name" value="Activin_recp"/>
</dbReference>
<dbReference type="InterPro" id="IPR003605">
    <property type="entry name" value="GS_dom"/>
</dbReference>
<dbReference type="InterPro" id="IPR011009">
    <property type="entry name" value="Kinase-like_dom_sf"/>
</dbReference>
<dbReference type="InterPro" id="IPR000719">
    <property type="entry name" value="Prot_kinase_dom"/>
</dbReference>
<dbReference type="InterPro" id="IPR017441">
    <property type="entry name" value="Protein_kinase_ATP_BS"/>
</dbReference>
<dbReference type="InterPro" id="IPR008271">
    <property type="entry name" value="Ser/Thr_kinase_AS"/>
</dbReference>
<dbReference type="InterPro" id="IPR045860">
    <property type="entry name" value="Snake_toxin-like_sf"/>
</dbReference>
<dbReference type="InterPro" id="IPR000333">
    <property type="entry name" value="TGFB_receptor"/>
</dbReference>
<dbReference type="PANTHER" id="PTHR23255:SF50">
    <property type="entry name" value="BONE MORPHOGENETIC PROTEIN RECEPTOR TYPE-1A"/>
    <property type="match status" value="1"/>
</dbReference>
<dbReference type="PANTHER" id="PTHR23255">
    <property type="entry name" value="TRANSFORMING GROWTH FACTOR-BETA RECEPTOR TYPE I AND II"/>
    <property type="match status" value="1"/>
</dbReference>
<dbReference type="Pfam" id="PF01064">
    <property type="entry name" value="Activin_recp"/>
    <property type="match status" value="1"/>
</dbReference>
<dbReference type="Pfam" id="PF00069">
    <property type="entry name" value="Pkinase"/>
    <property type="match status" value="1"/>
</dbReference>
<dbReference type="Pfam" id="PF08515">
    <property type="entry name" value="TGF_beta_GS"/>
    <property type="match status" value="1"/>
</dbReference>
<dbReference type="SMART" id="SM00467">
    <property type="entry name" value="GS"/>
    <property type="match status" value="1"/>
</dbReference>
<dbReference type="SMART" id="SM00220">
    <property type="entry name" value="S_TKc"/>
    <property type="match status" value="1"/>
</dbReference>
<dbReference type="SUPFAM" id="SSF56112">
    <property type="entry name" value="Protein kinase-like (PK-like)"/>
    <property type="match status" value="1"/>
</dbReference>
<dbReference type="SUPFAM" id="SSF57302">
    <property type="entry name" value="Snake toxin-like"/>
    <property type="match status" value="1"/>
</dbReference>
<dbReference type="PROSITE" id="PS51256">
    <property type="entry name" value="GS"/>
    <property type="match status" value="1"/>
</dbReference>
<dbReference type="PROSITE" id="PS00107">
    <property type="entry name" value="PROTEIN_KINASE_ATP"/>
    <property type="match status" value="1"/>
</dbReference>
<dbReference type="PROSITE" id="PS50011">
    <property type="entry name" value="PROTEIN_KINASE_DOM"/>
    <property type="match status" value="1"/>
</dbReference>
<dbReference type="PROSITE" id="PS00108">
    <property type="entry name" value="PROTEIN_KINASE_ST"/>
    <property type="match status" value="1"/>
</dbReference>
<keyword id="KW-0002">3D-structure</keyword>
<keyword id="KW-0067">ATP-binding</keyword>
<keyword id="KW-1003">Cell membrane</keyword>
<keyword id="KW-0225">Disease variant</keyword>
<keyword id="KW-1015">Disulfide bond</keyword>
<keyword id="KW-0325">Glycoprotein</keyword>
<keyword id="KW-0418">Kinase</keyword>
<keyword id="KW-0460">Magnesium</keyword>
<keyword id="KW-0464">Manganese</keyword>
<keyword id="KW-0472">Membrane</keyword>
<keyword id="KW-0479">Metal-binding</keyword>
<keyword id="KW-0547">Nucleotide-binding</keyword>
<keyword id="KW-1267">Proteomics identification</keyword>
<keyword id="KW-0675">Receptor</keyword>
<keyword id="KW-1185">Reference proteome</keyword>
<keyword id="KW-0723">Serine/threonine-protein kinase</keyword>
<keyword id="KW-0732">Signal</keyword>
<keyword id="KW-0808">Transferase</keyword>
<keyword id="KW-0812">Transmembrane</keyword>
<keyword id="KW-1133">Transmembrane helix</keyword>